<proteinExistence type="evidence at protein level"/>
<gene>
    <name evidence="2" type="primary">PA</name>
</gene>
<organismHost>
    <name type="scientific">Aves</name>
    <dbReference type="NCBI Taxonomy" id="8782"/>
</organismHost>
<organismHost>
    <name type="scientific">Homo sapiens</name>
    <name type="common">Human</name>
    <dbReference type="NCBI Taxonomy" id="9606"/>
</organismHost>
<organismHost>
    <name type="scientific">Sus scrofa</name>
    <name type="common">Pig</name>
    <dbReference type="NCBI Taxonomy" id="9823"/>
</organismHost>
<feature type="chain" id="PRO_0000078801" description="Polymerase acidic protein">
    <location>
        <begin position="1"/>
        <end position="716"/>
    </location>
</feature>
<feature type="short sequence motif" description="Nuclear localization signal 1 (NLS1)" evidence="1 2">
    <location>
        <begin position="124"/>
        <end position="139"/>
    </location>
</feature>
<feature type="short sequence motif" description="Nuclear localization signal 2 (NLS2)" evidence="1 2">
    <location>
        <begin position="184"/>
        <end position="247"/>
    </location>
</feature>
<feature type="binding site" evidence="2">
    <location>
        <position position="41"/>
    </location>
    <ligand>
        <name>Mn(2+)</name>
        <dbReference type="ChEBI" id="CHEBI:29035"/>
        <label>1</label>
    </ligand>
</feature>
<feature type="binding site" evidence="2">
    <location>
        <position position="80"/>
    </location>
    <ligand>
        <name>Mn(2+)</name>
        <dbReference type="ChEBI" id="CHEBI:29035"/>
        <label>2</label>
    </ligand>
</feature>
<feature type="binding site" evidence="2">
    <location>
        <position position="108"/>
    </location>
    <ligand>
        <name>Mn(2+)</name>
        <dbReference type="ChEBI" id="CHEBI:29035"/>
        <label>1</label>
    </ligand>
</feature>
<feature type="binding site" evidence="2">
    <location>
        <position position="108"/>
    </location>
    <ligand>
        <name>Mn(2+)</name>
        <dbReference type="ChEBI" id="CHEBI:29035"/>
        <label>2</label>
    </ligand>
</feature>
<feature type="binding site" evidence="2">
    <location>
        <position position="119"/>
    </location>
    <ligand>
        <name>Mn(2+)</name>
        <dbReference type="ChEBI" id="CHEBI:29035"/>
        <label>1</label>
    </ligand>
</feature>
<feature type="binding site" evidence="2">
    <location>
        <position position="120"/>
    </location>
    <ligand>
        <name>Mn(2+)</name>
        <dbReference type="ChEBI" id="CHEBI:29035"/>
        <label>1</label>
    </ligand>
</feature>
<feature type="mutagenesis site" description="Confers temperature sensitivity." evidence="4">
    <original>L</original>
    <variation>P</variation>
    <location>
        <position position="226"/>
    </location>
</feature>
<feature type="strand" evidence="5">
    <location>
        <begin position="273"/>
        <end position="275"/>
    </location>
</feature>
<feature type="strand" evidence="7">
    <location>
        <begin position="280"/>
        <end position="282"/>
    </location>
</feature>
<feature type="strand" evidence="5">
    <location>
        <begin position="290"/>
        <end position="294"/>
    </location>
</feature>
<feature type="turn" evidence="5">
    <location>
        <begin position="298"/>
        <end position="301"/>
    </location>
</feature>
<feature type="helix" evidence="5">
    <location>
        <begin position="303"/>
        <end position="312"/>
    </location>
</feature>
<feature type="strand" evidence="5">
    <location>
        <begin position="317"/>
        <end position="324"/>
    </location>
</feature>
<feature type="strand" evidence="6">
    <location>
        <begin position="327"/>
        <end position="329"/>
    </location>
</feature>
<feature type="helix" evidence="5">
    <location>
        <begin position="331"/>
        <end position="350"/>
    </location>
</feature>
<feature type="strand" evidence="5">
    <location>
        <begin position="351"/>
        <end position="353"/>
    </location>
</feature>
<feature type="strand" evidence="5">
    <location>
        <begin position="356"/>
        <end position="360"/>
    </location>
</feature>
<feature type="helix" evidence="5">
    <location>
        <begin position="364"/>
        <end position="369"/>
    </location>
</feature>
<feature type="helix" evidence="5">
    <location>
        <begin position="406"/>
        <end position="415"/>
    </location>
</feature>
<feature type="strand" evidence="5">
    <location>
        <begin position="419"/>
        <end position="421"/>
    </location>
</feature>
<feature type="helix" evidence="5">
    <location>
        <begin position="437"/>
        <end position="450"/>
    </location>
</feature>
<feature type="helix" evidence="5">
    <location>
        <begin position="454"/>
        <end position="475"/>
    </location>
</feature>
<feature type="turn" evidence="5">
    <location>
        <begin position="476"/>
        <end position="478"/>
    </location>
</feature>
<feature type="strand" evidence="5">
    <location>
        <begin position="479"/>
        <end position="490"/>
    </location>
</feature>
<feature type="strand" evidence="5">
    <location>
        <begin position="496"/>
        <end position="506"/>
    </location>
</feature>
<feature type="strand" evidence="8">
    <location>
        <begin position="513"/>
        <end position="515"/>
    </location>
</feature>
<feature type="strand" evidence="5">
    <location>
        <begin position="517"/>
        <end position="526"/>
    </location>
</feature>
<feature type="helix" evidence="6">
    <location>
        <begin position="530"/>
        <end position="532"/>
    </location>
</feature>
<feature type="helix" evidence="5">
    <location>
        <begin position="534"/>
        <end position="537"/>
    </location>
</feature>
<feature type="strand" evidence="5">
    <location>
        <begin position="541"/>
        <end position="550"/>
    </location>
</feature>
<feature type="strand" evidence="5">
    <location>
        <begin position="555"/>
        <end position="571"/>
    </location>
</feature>
<feature type="helix" evidence="5">
    <location>
        <begin position="572"/>
        <end position="579"/>
    </location>
</feature>
<feature type="helix" evidence="5">
    <location>
        <begin position="580"/>
        <end position="582"/>
    </location>
</feature>
<feature type="helix" evidence="5">
    <location>
        <begin position="583"/>
        <end position="603"/>
    </location>
</feature>
<feature type="helix" evidence="5">
    <location>
        <begin position="608"/>
        <end position="612"/>
    </location>
</feature>
<feature type="helix" evidence="5">
    <location>
        <begin position="633"/>
        <end position="649"/>
    </location>
</feature>
<feature type="helix" evidence="5">
    <location>
        <begin position="653"/>
        <end position="675"/>
    </location>
</feature>
<feature type="helix" evidence="5">
    <location>
        <begin position="686"/>
        <end position="691"/>
    </location>
</feature>
<feature type="helix" evidence="5">
    <location>
        <begin position="698"/>
        <end position="712"/>
    </location>
</feature>
<name>PA_I33A0</name>
<evidence type="ECO:0000250" key="1">
    <source>
        <dbReference type="UniProtKB" id="P03433"/>
    </source>
</evidence>
<evidence type="ECO:0000255" key="2">
    <source>
        <dbReference type="HAMAP-Rule" id="MF_04063"/>
    </source>
</evidence>
<evidence type="ECO:0000269" key="3">
    <source>
    </source>
</evidence>
<evidence type="ECO:0000269" key="4">
    <source>
    </source>
</evidence>
<evidence type="ECO:0007829" key="5">
    <source>
        <dbReference type="PDB" id="4IUJ"/>
    </source>
</evidence>
<evidence type="ECO:0007829" key="6">
    <source>
        <dbReference type="PDB" id="5IF5"/>
    </source>
</evidence>
<evidence type="ECO:0007829" key="7">
    <source>
        <dbReference type="PDB" id="5IF8"/>
    </source>
</evidence>
<evidence type="ECO:0007829" key="8">
    <source>
        <dbReference type="PDB" id="5IFB"/>
    </source>
</evidence>
<sequence>MEDFVRQCFNPMIVELAEKAMKEYGEDLKIETNKFAAICTHLEVCFMYSDFHFIDEQGESIVVELGDPNALLKHRFEIIEGRDRTIAWTVINSICNTTGAEKPKFLPDLYDYKKNRFIEIGVTRREVHIYYLEKANKIKSEKTHIHIFSFTGEEMATKADYTLDEESRARIKTRLFTIRQEMASRGLWDSFRQSERGEETIEERFEITGTMRKLADQSLPPNFSSLENFRAYVDGFEPNGYIEGKLSQMSKEVNARIEPFLKSTPRPLRLPDGPPCSQRSKFLLMDALKLSIEDPSHEGEGIPLYDAIKCMRTFFGWKEPNVVKPHEKGINPNYLLSWKQVLAELQDIENEEKIPRTKNMKKTSQLKWALGENMAPEKVDFDDCKDVGDLKQYDSDEPELRSLASWIQNEFNKACELTDSSWIELDEIGEDAAPIEHIASMRRNYFTAEVSHCRATEYIMKGVYINTALLNASCAAMDDFQLIPMISKCRTKEGRRKTNLYGFIIKGRSHLRNDTDVVNFVSMEFSLTDPRLEPHKWEKYCVLEVGDMLLRSAIGHVSRPMFLYVRTNGTSKIKMKWGMEMRRCLLQSLQQIESMIEAESSVKEKDMTKEFFENKSETWPVGESPKGVEEGSIGKVCRTLLAKSVFNSLYASPQLEGFSAESRKLLLIVQALRDNLEPGTFDLGGLYEAIEECLINDPWVLLNASWFNSFLTHALR</sequence>
<reference key="1">
    <citation type="journal article" date="1990" name="Nucleic Acids Res.">
        <title>Nucleotide sequence of the PA gene of influenza A/WSN/33(H1N1).</title>
        <authorList>
            <person name="Odagiri T."/>
            <person name="Tobita K."/>
        </authorList>
    </citation>
    <scope>NUCLEOTIDE SEQUENCE [GENOMIC RNA]</scope>
</reference>
<reference key="2">
    <citation type="journal article" date="2004" name="J. Virol.">
        <title>The PA subunit is required for efficient nuclear accumulation of the PB1 subunit of the influenza A virus RNA polymerase complex.</title>
        <authorList>
            <person name="Fodor E."/>
            <person name="Smith M."/>
        </authorList>
    </citation>
    <scope>SUBCELLULAR LOCATION</scope>
    <source>
        <strain>A/WSN/33</strain>
    </source>
</reference>
<reference key="3">
    <citation type="journal article" date="2005" name="J. Virol.">
        <title>Involvement of influenza virus PA subunit in assembly of functional RNA polymerase complexes.</title>
        <authorList>
            <person name="Kawaguchi A."/>
            <person name="Naito T."/>
            <person name="Nagata K."/>
        </authorList>
    </citation>
    <scope>MUTAGENESIS OF LEU-226</scope>
</reference>
<keyword id="KW-0002">3D-structure</keyword>
<keyword id="KW-1157">Cap snatching</keyword>
<keyword id="KW-0255">Endonuclease</keyword>
<keyword id="KW-1262">Eukaryotic host gene expression shutoff by virus</keyword>
<keyword id="KW-1191">Eukaryotic host transcription shutoff by virus</keyword>
<keyword id="KW-1035">Host cytoplasm</keyword>
<keyword id="KW-1190">Host gene expression shutoff by virus</keyword>
<keyword id="KW-1048">Host nucleus</keyword>
<keyword id="KW-0945">Host-virus interaction</keyword>
<keyword id="KW-0378">Hydrolase</keyword>
<keyword id="KW-1104">Inhibition of host RNA polymerase II by virus</keyword>
<keyword id="KW-0464">Manganese</keyword>
<keyword id="KW-0479">Metal-binding</keyword>
<keyword id="KW-0540">Nuclease</keyword>
<keyword id="KW-0597">Phosphoprotein</keyword>
<keyword id="KW-0688">Ribosomal frameshifting</keyword>
<organism>
    <name type="scientific">Influenza A virus (strain A/Wilson-Smith/1933 H1N1)</name>
    <name type="common">Influenza A virus (strain A/WS/1933 H1N1)</name>
    <dbReference type="NCBI Taxonomy" id="381518"/>
    <lineage>
        <taxon>Viruses</taxon>
        <taxon>Riboviria</taxon>
        <taxon>Orthornavirae</taxon>
        <taxon>Negarnaviricota</taxon>
        <taxon>Polyploviricotina</taxon>
        <taxon>Insthoviricetes</taxon>
        <taxon>Articulavirales</taxon>
        <taxon>Orthomyxoviridae</taxon>
        <taxon>Alphainfluenzavirus</taxon>
        <taxon>Alphainfluenzavirus influenzae</taxon>
        <taxon>Influenza A virus</taxon>
    </lineage>
</organism>
<comment type="function">
    <text evidence="2">Plays an essential role in viral RNA transcription and replication by forming the heterotrimeric polymerase complex together with PB1 and PB2 subunits. The complex transcribes viral mRNAs by using a unique mechanism called cap-snatching. It consists in the hijacking and cleavage of host capped pre-mRNAs. These short capped RNAs are then used as primers for viral mRNAs. The PB2 subunit is responsible for the binding of the 5' cap of cellular pre-mRNAs which are subsequently cleaved after 10-13 nucleotides by the PA subunit that carries the endonuclease activity.</text>
</comment>
<comment type="cofactor">
    <cofactor evidence="2">
        <name>Mn(2+)</name>
        <dbReference type="ChEBI" id="CHEBI:29035"/>
    </cofactor>
    <text evidence="2">Binds 2 manganese ions per subunit.</text>
</comment>
<comment type="subunit">
    <text evidence="1 2">Influenza RNA polymerase is composed of three subunits: PB1, PB2 and PA. Interacts (via C-terminus) with PB1 (via N-terminus).</text>
</comment>
<comment type="interaction">
    <interactant intactId="EBI-8431752">
        <id>P15659</id>
    </interactant>
    <interactant intactId="EBI-8430745">
        <id>P03427</id>
        <label>PB2</label>
    </interactant>
    <organismsDiffer>false</organismsDiffer>
    <experiments>3</experiments>
</comment>
<comment type="interaction">
    <interactant intactId="EBI-8431752">
        <id>P15659</id>
    </interactant>
    <interactant intactId="EBI-306876">
        <id>P51784</id>
        <label>USP11</label>
    </interactant>
    <organismsDiffer>true</organismsDiffer>
    <experiments>2</experiments>
</comment>
<comment type="subcellular location">
    <subcellularLocation>
        <location evidence="2 3">Host cytoplasm</location>
    </subcellularLocation>
    <subcellularLocation>
        <location evidence="2 3">Host nucleus</location>
    </subcellularLocation>
    <text evidence="2 3">PB1 and PA are transported in the host nucleus as a complex.</text>
</comment>
<comment type="alternative products">
    <event type="ribosomal frameshifting"/>
    <isoform>
        <id>P15659-1</id>
        <name>PA</name>
        <sequence type="displayed"/>
    </isoform>
    <isoform>
        <id>P0DJW8-1</id>
        <name>PA-X</name>
        <sequence type="external"/>
    </isoform>
</comment>
<comment type="PTM">
    <text evidence="1 2">Phosphorylated on serines and threonines by host kinases, including human casein kinase II.</text>
</comment>
<comment type="similarity">
    <text evidence="2">Belongs to the influenza viruses PA family.</text>
</comment>
<dbReference type="EC" id="3.1.-.-" evidence="2"/>
<dbReference type="EMBL" id="X17336">
    <property type="protein sequence ID" value="CAA35212.1"/>
    <property type="molecule type" value="Genomic_RNA"/>
</dbReference>
<dbReference type="PDB" id="4IUJ">
    <property type="method" value="X-ray"/>
    <property type="resolution" value="1.90 A"/>
    <property type="chains" value="A=254-716"/>
</dbReference>
<dbReference type="PDB" id="5IEQ">
    <property type="method" value="X-ray"/>
    <property type="resolution" value="2.20 A"/>
    <property type="chains" value="A=254-716"/>
</dbReference>
<dbReference type="PDB" id="5IF2">
    <property type="method" value="X-ray"/>
    <property type="resolution" value="2.35 A"/>
    <property type="chains" value="A=254-716"/>
</dbReference>
<dbReference type="PDB" id="5IF5">
    <property type="method" value="X-ray"/>
    <property type="resolution" value="2.25 A"/>
    <property type="chains" value="A=254-716"/>
</dbReference>
<dbReference type="PDB" id="5IF7">
    <property type="method" value="X-ray"/>
    <property type="resolution" value="2.65 A"/>
    <property type="chains" value="A=254-716"/>
</dbReference>
<dbReference type="PDB" id="5IF8">
    <property type="method" value="X-ray"/>
    <property type="resolution" value="2.30 A"/>
    <property type="chains" value="A=254-716"/>
</dbReference>
<dbReference type="PDB" id="5IFB">
    <property type="method" value="X-ray"/>
    <property type="resolution" value="2.45 A"/>
    <property type="chains" value="A=254-716"/>
</dbReference>
<dbReference type="PDB" id="5IFC">
    <property type="method" value="X-ray"/>
    <property type="resolution" value="2.65 A"/>
    <property type="chains" value="A=254-716"/>
</dbReference>
<dbReference type="PDB" id="5IFD">
    <property type="method" value="X-ray"/>
    <property type="resolution" value="2.65 A"/>
    <property type="chains" value="A=254-716"/>
</dbReference>
<dbReference type="PDB" id="5V0U">
    <property type="method" value="X-ray"/>
    <property type="resolution" value="2.45 A"/>
    <property type="chains" value="A=254-716"/>
</dbReference>
<dbReference type="PDB" id="6CFP">
    <property type="method" value="X-ray"/>
    <property type="resolution" value="2.45 A"/>
    <property type="chains" value="A=254-716"/>
</dbReference>
<dbReference type="PDBsum" id="4IUJ"/>
<dbReference type="PDBsum" id="5IEQ"/>
<dbReference type="PDBsum" id="5IF2"/>
<dbReference type="PDBsum" id="5IF5"/>
<dbReference type="PDBsum" id="5IF7"/>
<dbReference type="PDBsum" id="5IF8"/>
<dbReference type="PDBsum" id="5IFB"/>
<dbReference type="PDBsum" id="5IFC"/>
<dbReference type="PDBsum" id="5IFD"/>
<dbReference type="PDBsum" id="5V0U"/>
<dbReference type="PDBsum" id="6CFP"/>
<dbReference type="SMR" id="P15659"/>
<dbReference type="IntAct" id="P15659">
    <property type="interactions" value="32"/>
</dbReference>
<dbReference type="MINT" id="P15659"/>
<dbReference type="MEROPS" id="S62.001"/>
<dbReference type="EvolutionaryTrace" id="P15659"/>
<dbReference type="Proteomes" id="UP000000834">
    <property type="component" value="Genome"/>
</dbReference>
<dbReference type="GO" id="GO:0030430">
    <property type="term" value="C:host cell cytoplasm"/>
    <property type="evidence" value="ECO:0007669"/>
    <property type="project" value="UniProtKB-SubCell"/>
</dbReference>
<dbReference type="GO" id="GO:0042025">
    <property type="term" value="C:host cell nucleus"/>
    <property type="evidence" value="ECO:0007669"/>
    <property type="project" value="UniProtKB-SubCell"/>
</dbReference>
<dbReference type="GO" id="GO:0004519">
    <property type="term" value="F:endonuclease activity"/>
    <property type="evidence" value="ECO:0007669"/>
    <property type="project" value="UniProtKB-KW"/>
</dbReference>
<dbReference type="GO" id="GO:0046872">
    <property type="term" value="F:metal ion binding"/>
    <property type="evidence" value="ECO:0007669"/>
    <property type="project" value="UniProtKB-KW"/>
</dbReference>
<dbReference type="GO" id="GO:0003723">
    <property type="term" value="F:RNA binding"/>
    <property type="evidence" value="ECO:0007669"/>
    <property type="project" value="UniProtKB-UniRule"/>
</dbReference>
<dbReference type="GO" id="GO:0097747">
    <property type="term" value="F:RNA polymerase activity"/>
    <property type="evidence" value="ECO:0000315"/>
    <property type="project" value="DisProt"/>
</dbReference>
<dbReference type="GO" id="GO:0075526">
    <property type="term" value="P:cap snatching"/>
    <property type="evidence" value="ECO:0007669"/>
    <property type="project" value="UniProtKB-UniRule"/>
</dbReference>
<dbReference type="GO" id="GO:0006351">
    <property type="term" value="P:DNA-templated transcription"/>
    <property type="evidence" value="ECO:0007669"/>
    <property type="project" value="UniProtKB-UniRule"/>
</dbReference>
<dbReference type="GO" id="GO:0045071">
    <property type="term" value="P:negative regulation of viral genome replication"/>
    <property type="evidence" value="ECO:0000315"/>
    <property type="project" value="DisProt"/>
</dbReference>
<dbReference type="GO" id="GO:0032897">
    <property type="term" value="P:negative regulation of viral transcription"/>
    <property type="evidence" value="ECO:0000315"/>
    <property type="project" value="DisProt"/>
</dbReference>
<dbReference type="GO" id="GO:0039689">
    <property type="term" value="P:negative stranded viral RNA replication"/>
    <property type="evidence" value="ECO:0000314"/>
    <property type="project" value="UniProtKB"/>
</dbReference>
<dbReference type="GO" id="GO:0006606">
    <property type="term" value="P:protein import into nucleus"/>
    <property type="evidence" value="ECO:0000314"/>
    <property type="project" value="DisProt"/>
</dbReference>
<dbReference type="GO" id="GO:0039657">
    <property type="term" value="P:symbiont-mediated suppression of host gene expression"/>
    <property type="evidence" value="ECO:0007669"/>
    <property type="project" value="UniProtKB-KW"/>
</dbReference>
<dbReference type="GO" id="GO:0039523">
    <property type="term" value="P:symbiont-mediated suppression of host mRNA transcription via inhibition of RNA polymerase II activity"/>
    <property type="evidence" value="ECO:0007669"/>
    <property type="project" value="UniProtKB-UniRule"/>
</dbReference>
<dbReference type="GO" id="GO:0075523">
    <property type="term" value="P:viral translational frameshifting"/>
    <property type="evidence" value="ECO:0007669"/>
    <property type="project" value="UniProtKB-KW"/>
</dbReference>
<dbReference type="FunFam" id="3.40.91.90:FF:000001">
    <property type="entry name" value="Polymerase acidic protein"/>
    <property type="match status" value="1"/>
</dbReference>
<dbReference type="Gene3D" id="3.40.91.90">
    <property type="entry name" value="Influenza RNA-dependent RNA polymerase subunit PA, endonuclease domain"/>
    <property type="match status" value="1"/>
</dbReference>
<dbReference type="HAMAP" id="MF_04063">
    <property type="entry name" value="INFV_PA"/>
    <property type="match status" value="1"/>
</dbReference>
<dbReference type="InterPro" id="IPR037534">
    <property type="entry name" value="INFV_PA"/>
</dbReference>
<dbReference type="InterPro" id="IPR001009">
    <property type="entry name" value="PA/PA-X"/>
</dbReference>
<dbReference type="InterPro" id="IPR038372">
    <property type="entry name" value="PA/PA-X_sf"/>
</dbReference>
<dbReference type="Pfam" id="PF00603">
    <property type="entry name" value="Flu_PA"/>
    <property type="match status" value="1"/>
</dbReference>
<accession>P15659</accession>
<protein>
    <recommendedName>
        <fullName evidence="2">Polymerase acidic protein</fullName>
        <ecNumber evidence="2">3.1.-.-</ecNumber>
    </recommendedName>
    <alternativeName>
        <fullName evidence="2">RNA-directed RNA polymerase subunit P2</fullName>
    </alternativeName>
</protein>